<proteinExistence type="inferred from homology"/>
<comment type="function">
    <text evidence="2">GTP hydrolase that promotes the GTP-dependent binding of aminoacyl-tRNA to the A-site of ribosomes during protein biosynthesis.</text>
</comment>
<comment type="catalytic activity">
    <reaction evidence="2">
        <text>GTP + H2O = GDP + phosphate + H(+)</text>
        <dbReference type="Rhea" id="RHEA:19669"/>
        <dbReference type="ChEBI" id="CHEBI:15377"/>
        <dbReference type="ChEBI" id="CHEBI:15378"/>
        <dbReference type="ChEBI" id="CHEBI:37565"/>
        <dbReference type="ChEBI" id="CHEBI:43474"/>
        <dbReference type="ChEBI" id="CHEBI:58189"/>
        <dbReference type="EC" id="3.6.5.3"/>
    </reaction>
    <physiologicalReaction direction="left-to-right" evidence="2">
        <dbReference type="Rhea" id="RHEA:19670"/>
    </physiologicalReaction>
</comment>
<comment type="subunit">
    <text evidence="2">Monomer.</text>
</comment>
<comment type="subcellular location">
    <subcellularLocation>
        <location evidence="2">Cytoplasm</location>
    </subcellularLocation>
</comment>
<comment type="similarity">
    <text evidence="2">Belongs to the TRAFAC class translation factor GTPase superfamily. Classic translation factor GTPase family. EF-Tu/EF-1A subfamily.</text>
</comment>
<name>EFTU_ALKOO</name>
<dbReference type="EC" id="3.6.5.3" evidence="2"/>
<dbReference type="EMBL" id="CP000853">
    <property type="protein sequence ID" value="ABW18038.1"/>
    <property type="molecule type" value="Genomic_DNA"/>
</dbReference>
<dbReference type="EMBL" id="CP000853">
    <property type="protein sequence ID" value="ABW18052.1"/>
    <property type="molecule type" value="Genomic_DNA"/>
</dbReference>
<dbReference type="RefSeq" id="WP_012158353.1">
    <property type="nucleotide sequence ID" value="NC_009922.1"/>
</dbReference>
<dbReference type="SMR" id="A8MLC4"/>
<dbReference type="STRING" id="350688.Clos_0476"/>
<dbReference type="KEGG" id="aoe:Clos_0476"/>
<dbReference type="KEGG" id="aoe:Clos_0490"/>
<dbReference type="eggNOG" id="COG0050">
    <property type="taxonomic scope" value="Bacteria"/>
</dbReference>
<dbReference type="HOGENOM" id="CLU_007265_0_0_9"/>
<dbReference type="OrthoDB" id="9804504at2"/>
<dbReference type="Proteomes" id="UP000000269">
    <property type="component" value="Chromosome"/>
</dbReference>
<dbReference type="GO" id="GO:0005829">
    <property type="term" value="C:cytosol"/>
    <property type="evidence" value="ECO:0007669"/>
    <property type="project" value="TreeGrafter"/>
</dbReference>
<dbReference type="GO" id="GO:0005525">
    <property type="term" value="F:GTP binding"/>
    <property type="evidence" value="ECO:0007669"/>
    <property type="project" value="UniProtKB-UniRule"/>
</dbReference>
<dbReference type="GO" id="GO:0003924">
    <property type="term" value="F:GTPase activity"/>
    <property type="evidence" value="ECO:0007669"/>
    <property type="project" value="InterPro"/>
</dbReference>
<dbReference type="GO" id="GO:0003746">
    <property type="term" value="F:translation elongation factor activity"/>
    <property type="evidence" value="ECO:0007669"/>
    <property type="project" value="UniProtKB-UniRule"/>
</dbReference>
<dbReference type="CDD" id="cd01884">
    <property type="entry name" value="EF_Tu"/>
    <property type="match status" value="1"/>
</dbReference>
<dbReference type="CDD" id="cd03697">
    <property type="entry name" value="EFTU_II"/>
    <property type="match status" value="1"/>
</dbReference>
<dbReference type="CDD" id="cd03707">
    <property type="entry name" value="EFTU_III"/>
    <property type="match status" value="1"/>
</dbReference>
<dbReference type="FunFam" id="2.40.30.10:FF:000001">
    <property type="entry name" value="Elongation factor Tu"/>
    <property type="match status" value="1"/>
</dbReference>
<dbReference type="FunFam" id="3.40.50.300:FF:000003">
    <property type="entry name" value="Elongation factor Tu"/>
    <property type="match status" value="1"/>
</dbReference>
<dbReference type="Gene3D" id="3.40.50.300">
    <property type="entry name" value="P-loop containing nucleotide triphosphate hydrolases"/>
    <property type="match status" value="1"/>
</dbReference>
<dbReference type="Gene3D" id="2.40.30.10">
    <property type="entry name" value="Translation factors"/>
    <property type="match status" value="2"/>
</dbReference>
<dbReference type="HAMAP" id="MF_00118_B">
    <property type="entry name" value="EF_Tu_B"/>
    <property type="match status" value="1"/>
</dbReference>
<dbReference type="InterPro" id="IPR041709">
    <property type="entry name" value="EF-Tu_GTP-bd"/>
</dbReference>
<dbReference type="InterPro" id="IPR050055">
    <property type="entry name" value="EF-Tu_GTPase"/>
</dbReference>
<dbReference type="InterPro" id="IPR004161">
    <property type="entry name" value="EFTu-like_2"/>
</dbReference>
<dbReference type="InterPro" id="IPR033720">
    <property type="entry name" value="EFTU_2"/>
</dbReference>
<dbReference type="InterPro" id="IPR031157">
    <property type="entry name" value="G_TR_CS"/>
</dbReference>
<dbReference type="InterPro" id="IPR027417">
    <property type="entry name" value="P-loop_NTPase"/>
</dbReference>
<dbReference type="InterPro" id="IPR005225">
    <property type="entry name" value="Small_GTP-bd"/>
</dbReference>
<dbReference type="InterPro" id="IPR000795">
    <property type="entry name" value="T_Tr_GTP-bd_dom"/>
</dbReference>
<dbReference type="InterPro" id="IPR009000">
    <property type="entry name" value="Transl_B-barrel_sf"/>
</dbReference>
<dbReference type="InterPro" id="IPR009001">
    <property type="entry name" value="Transl_elong_EF1A/Init_IF2_C"/>
</dbReference>
<dbReference type="InterPro" id="IPR004541">
    <property type="entry name" value="Transl_elong_EFTu/EF1A_bac/org"/>
</dbReference>
<dbReference type="InterPro" id="IPR004160">
    <property type="entry name" value="Transl_elong_EFTu/EF1A_C"/>
</dbReference>
<dbReference type="NCBIfam" id="TIGR00485">
    <property type="entry name" value="EF-Tu"/>
    <property type="match status" value="1"/>
</dbReference>
<dbReference type="NCBIfam" id="NF000766">
    <property type="entry name" value="PRK00049.1"/>
    <property type="match status" value="1"/>
</dbReference>
<dbReference type="NCBIfam" id="NF009372">
    <property type="entry name" value="PRK12735.1"/>
    <property type="match status" value="1"/>
</dbReference>
<dbReference type="NCBIfam" id="NF009373">
    <property type="entry name" value="PRK12736.1"/>
    <property type="match status" value="1"/>
</dbReference>
<dbReference type="NCBIfam" id="TIGR00231">
    <property type="entry name" value="small_GTP"/>
    <property type="match status" value="1"/>
</dbReference>
<dbReference type="PANTHER" id="PTHR43721:SF22">
    <property type="entry name" value="ELONGATION FACTOR TU, MITOCHONDRIAL"/>
    <property type="match status" value="1"/>
</dbReference>
<dbReference type="PANTHER" id="PTHR43721">
    <property type="entry name" value="ELONGATION FACTOR TU-RELATED"/>
    <property type="match status" value="1"/>
</dbReference>
<dbReference type="Pfam" id="PF00009">
    <property type="entry name" value="GTP_EFTU"/>
    <property type="match status" value="1"/>
</dbReference>
<dbReference type="Pfam" id="PF03144">
    <property type="entry name" value="GTP_EFTU_D2"/>
    <property type="match status" value="1"/>
</dbReference>
<dbReference type="Pfam" id="PF03143">
    <property type="entry name" value="GTP_EFTU_D3"/>
    <property type="match status" value="1"/>
</dbReference>
<dbReference type="PRINTS" id="PR00315">
    <property type="entry name" value="ELONGATNFCT"/>
</dbReference>
<dbReference type="SUPFAM" id="SSF50465">
    <property type="entry name" value="EF-Tu/eEF-1alpha/eIF2-gamma C-terminal domain"/>
    <property type="match status" value="1"/>
</dbReference>
<dbReference type="SUPFAM" id="SSF52540">
    <property type="entry name" value="P-loop containing nucleoside triphosphate hydrolases"/>
    <property type="match status" value="1"/>
</dbReference>
<dbReference type="SUPFAM" id="SSF50447">
    <property type="entry name" value="Translation proteins"/>
    <property type="match status" value="1"/>
</dbReference>
<dbReference type="PROSITE" id="PS00301">
    <property type="entry name" value="G_TR_1"/>
    <property type="match status" value="1"/>
</dbReference>
<dbReference type="PROSITE" id="PS51722">
    <property type="entry name" value="G_TR_2"/>
    <property type="match status" value="1"/>
</dbReference>
<organism>
    <name type="scientific">Alkaliphilus oremlandii (strain OhILAs)</name>
    <name type="common">Clostridium oremlandii (strain OhILAs)</name>
    <dbReference type="NCBI Taxonomy" id="350688"/>
    <lineage>
        <taxon>Bacteria</taxon>
        <taxon>Bacillati</taxon>
        <taxon>Bacillota</taxon>
        <taxon>Clostridia</taxon>
        <taxon>Peptostreptococcales</taxon>
        <taxon>Natronincolaceae</taxon>
        <taxon>Alkaliphilus</taxon>
    </lineage>
</organism>
<keyword id="KW-0963">Cytoplasm</keyword>
<keyword id="KW-0251">Elongation factor</keyword>
<keyword id="KW-0342">GTP-binding</keyword>
<keyword id="KW-0378">Hydrolase</keyword>
<keyword id="KW-0460">Magnesium</keyword>
<keyword id="KW-0479">Metal-binding</keyword>
<keyword id="KW-0547">Nucleotide-binding</keyword>
<keyword id="KW-0648">Protein biosynthesis</keyword>
<keyword id="KW-1185">Reference proteome</keyword>
<feature type="chain" id="PRO_0000337312" description="Elongation factor Tu">
    <location>
        <begin position="1"/>
        <end position="397"/>
    </location>
</feature>
<feature type="domain" description="tr-type G">
    <location>
        <begin position="10"/>
        <end position="206"/>
    </location>
</feature>
<feature type="region of interest" description="G1" evidence="1">
    <location>
        <begin position="19"/>
        <end position="26"/>
    </location>
</feature>
<feature type="region of interest" description="G2" evidence="1">
    <location>
        <begin position="61"/>
        <end position="65"/>
    </location>
</feature>
<feature type="region of interest" description="G3" evidence="1">
    <location>
        <begin position="82"/>
        <end position="85"/>
    </location>
</feature>
<feature type="region of interest" description="G4" evidence="1">
    <location>
        <begin position="137"/>
        <end position="140"/>
    </location>
</feature>
<feature type="region of interest" description="G5" evidence="1">
    <location>
        <begin position="175"/>
        <end position="177"/>
    </location>
</feature>
<feature type="binding site" evidence="2">
    <location>
        <begin position="19"/>
        <end position="26"/>
    </location>
    <ligand>
        <name>GTP</name>
        <dbReference type="ChEBI" id="CHEBI:37565"/>
    </ligand>
</feature>
<feature type="binding site" evidence="2">
    <location>
        <position position="26"/>
    </location>
    <ligand>
        <name>Mg(2+)</name>
        <dbReference type="ChEBI" id="CHEBI:18420"/>
    </ligand>
</feature>
<feature type="binding site" evidence="2">
    <location>
        <begin position="82"/>
        <end position="86"/>
    </location>
    <ligand>
        <name>GTP</name>
        <dbReference type="ChEBI" id="CHEBI:37565"/>
    </ligand>
</feature>
<feature type="binding site" evidence="2">
    <location>
        <begin position="137"/>
        <end position="140"/>
    </location>
    <ligand>
        <name>GTP</name>
        <dbReference type="ChEBI" id="CHEBI:37565"/>
    </ligand>
</feature>
<accession>A8MLC4</accession>
<evidence type="ECO:0000250" key="1"/>
<evidence type="ECO:0000255" key="2">
    <source>
        <dbReference type="HAMAP-Rule" id="MF_00118"/>
    </source>
</evidence>
<gene>
    <name evidence="2" type="primary">tuf1</name>
    <name type="ordered locus">Clos_0476</name>
</gene>
<gene>
    <name evidence="2" type="primary">tuf2</name>
    <name type="ordered locus">Clos_0490</name>
</gene>
<reference key="1">
    <citation type="submission" date="2007-10" db="EMBL/GenBank/DDBJ databases">
        <title>Complete genome of Alkaliphilus oremlandii OhILAs.</title>
        <authorList>
            <person name="Copeland A."/>
            <person name="Lucas S."/>
            <person name="Lapidus A."/>
            <person name="Barry K."/>
            <person name="Detter J.C."/>
            <person name="Glavina del Rio T."/>
            <person name="Hammon N."/>
            <person name="Israni S."/>
            <person name="Dalin E."/>
            <person name="Tice H."/>
            <person name="Pitluck S."/>
            <person name="Chain P."/>
            <person name="Malfatti S."/>
            <person name="Shin M."/>
            <person name="Vergez L."/>
            <person name="Schmutz J."/>
            <person name="Larimer F."/>
            <person name="Land M."/>
            <person name="Hauser L."/>
            <person name="Kyrpides N."/>
            <person name="Mikhailova N."/>
            <person name="Stolz J.F."/>
            <person name="Dawson A."/>
            <person name="Fisher E."/>
            <person name="Crable B."/>
            <person name="Perera E."/>
            <person name="Lisak J."/>
            <person name="Ranganathan M."/>
            <person name="Basu P."/>
            <person name="Richardson P."/>
        </authorList>
    </citation>
    <scope>NUCLEOTIDE SEQUENCE [LARGE SCALE GENOMIC DNA]</scope>
    <source>
        <strain>OhILAs</strain>
    </source>
</reference>
<sequence>MAKEKFDRSKPHVNIGTIGHVDHGKTTLTAAITNTLNTRYGTGAAVAFDKIDKAPEERERGITISTSHVEYETPNRHYAHVDCPGHADYVKNMITGAAQMDGAILVCSAADGPMPQTREHILLSRQVGVPYIVVFLNKCDMVDDEELLELVEMEVRDLLNEYEFPGDDTPIVRGSALQALNDPAGPWGDKIVELFEHIDTYIPEPTRAIDKSFLMPVEDVFSITGRGTVATGRVERGIIKVQDEVELVGLQEDSRKIVVTGVEMFRKLLDQAQAGDNVGLLLRGIQRTEIQRGQVLCKPGTIKPHTKFKAEVYVLKKEEGGRHTPFFDGYRPQFYFRTTDVTGATKLPDGMEMVMPGDNVTMEIDLIHPIAIEEGLRFAIREGGRTVGSGVVASIIE</sequence>
<protein>
    <recommendedName>
        <fullName evidence="2">Elongation factor Tu</fullName>
        <shortName evidence="2">EF-Tu</shortName>
        <ecNumber evidence="2">3.6.5.3</ecNumber>
    </recommendedName>
</protein>